<comment type="function">
    <text evidence="4">Heavy-metal-binding protein. Binds cadmium. May be involved in cadmium transport and play a role in cadmium detoxification.</text>
</comment>
<comment type="subunit">
    <text evidence="3">Interacts with ZHD11/HB29.</text>
</comment>
<comment type="subcellular location">
    <subcellularLocation>
        <location evidence="1">Membrane</location>
    </subcellularLocation>
</comment>
<comment type="tissue specificity">
    <text evidence="4">Expressed in roots, shoot apical meristem, leaves and flowers.</text>
</comment>
<comment type="disruption phenotype">
    <text evidence="4">No visible phenotype. Hipp20, hipp21 and hipp22 triple mutants are cadmium sensitive.</text>
</comment>
<comment type="similarity">
    <text evidence="7">Belongs to the HIPP family.</text>
</comment>
<reference key="1">
    <citation type="journal article" date="2000" name="Nature">
        <title>Sequence and analysis of chromosome 1 of the plant Arabidopsis thaliana.</title>
        <authorList>
            <person name="Theologis A."/>
            <person name="Ecker J.R."/>
            <person name="Palm C.J."/>
            <person name="Federspiel N.A."/>
            <person name="Kaul S."/>
            <person name="White O."/>
            <person name="Alonso J."/>
            <person name="Altafi H."/>
            <person name="Araujo R."/>
            <person name="Bowman C.L."/>
            <person name="Brooks S.Y."/>
            <person name="Buehler E."/>
            <person name="Chan A."/>
            <person name="Chao Q."/>
            <person name="Chen H."/>
            <person name="Cheuk R.F."/>
            <person name="Chin C.W."/>
            <person name="Chung M.K."/>
            <person name="Conn L."/>
            <person name="Conway A.B."/>
            <person name="Conway A.R."/>
            <person name="Creasy T.H."/>
            <person name="Dewar K."/>
            <person name="Dunn P."/>
            <person name="Etgu P."/>
            <person name="Feldblyum T.V."/>
            <person name="Feng J.-D."/>
            <person name="Fong B."/>
            <person name="Fujii C.Y."/>
            <person name="Gill J.E."/>
            <person name="Goldsmith A.D."/>
            <person name="Haas B."/>
            <person name="Hansen N.F."/>
            <person name="Hughes B."/>
            <person name="Huizar L."/>
            <person name="Hunter J.L."/>
            <person name="Jenkins J."/>
            <person name="Johnson-Hopson C."/>
            <person name="Khan S."/>
            <person name="Khaykin E."/>
            <person name="Kim C.J."/>
            <person name="Koo H.L."/>
            <person name="Kremenetskaia I."/>
            <person name="Kurtz D.B."/>
            <person name="Kwan A."/>
            <person name="Lam B."/>
            <person name="Langin-Hooper S."/>
            <person name="Lee A."/>
            <person name="Lee J.M."/>
            <person name="Lenz C.A."/>
            <person name="Li J.H."/>
            <person name="Li Y.-P."/>
            <person name="Lin X."/>
            <person name="Liu S.X."/>
            <person name="Liu Z.A."/>
            <person name="Luros J.S."/>
            <person name="Maiti R."/>
            <person name="Marziali A."/>
            <person name="Militscher J."/>
            <person name="Miranda M."/>
            <person name="Nguyen M."/>
            <person name="Nierman W.C."/>
            <person name="Osborne B.I."/>
            <person name="Pai G."/>
            <person name="Peterson J."/>
            <person name="Pham P.K."/>
            <person name="Rizzo M."/>
            <person name="Rooney T."/>
            <person name="Rowley D."/>
            <person name="Sakano H."/>
            <person name="Salzberg S.L."/>
            <person name="Schwartz J.R."/>
            <person name="Shinn P."/>
            <person name="Southwick A.M."/>
            <person name="Sun H."/>
            <person name="Tallon L.J."/>
            <person name="Tambunga G."/>
            <person name="Toriumi M.J."/>
            <person name="Town C.D."/>
            <person name="Utterback T."/>
            <person name="Van Aken S."/>
            <person name="Vaysberg M."/>
            <person name="Vysotskaia V.S."/>
            <person name="Walker M."/>
            <person name="Wu D."/>
            <person name="Yu G."/>
            <person name="Fraser C.M."/>
            <person name="Venter J.C."/>
            <person name="Davis R.W."/>
        </authorList>
    </citation>
    <scope>NUCLEOTIDE SEQUENCE [LARGE SCALE GENOMIC DNA]</scope>
    <source>
        <strain>cv. Columbia</strain>
    </source>
</reference>
<reference key="2">
    <citation type="journal article" date="2017" name="Plant J.">
        <title>Araport11: a complete reannotation of the Arabidopsis thaliana reference genome.</title>
        <authorList>
            <person name="Cheng C.Y."/>
            <person name="Krishnakumar V."/>
            <person name="Chan A.P."/>
            <person name="Thibaud-Nissen F."/>
            <person name="Schobel S."/>
            <person name="Town C.D."/>
        </authorList>
    </citation>
    <scope>GENOME REANNOTATION</scope>
    <source>
        <strain>cv. Columbia</strain>
    </source>
</reference>
<reference key="3">
    <citation type="journal article" date="2002" name="Science">
        <title>Functional annotation of a full-length Arabidopsis cDNA collection.</title>
        <authorList>
            <person name="Seki M."/>
            <person name="Narusaka M."/>
            <person name="Kamiya A."/>
            <person name="Ishida J."/>
            <person name="Satou M."/>
            <person name="Sakurai T."/>
            <person name="Nakajima M."/>
            <person name="Enju A."/>
            <person name="Akiyama K."/>
            <person name="Oono Y."/>
            <person name="Muramatsu M."/>
            <person name="Hayashizaki Y."/>
            <person name="Kawai J."/>
            <person name="Carninci P."/>
            <person name="Itoh M."/>
            <person name="Ishii Y."/>
            <person name="Arakawa T."/>
            <person name="Shibata K."/>
            <person name="Shinagawa A."/>
            <person name="Shinozaki K."/>
        </authorList>
    </citation>
    <scope>NUCLEOTIDE SEQUENCE [LARGE SCALE MRNA]</scope>
    <source>
        <strain>cv. Columbia</strain>
    </source>
</reference>
<reference key="4">
    <citation type="journal article" date="2003" name="Science">
        <title>Empirical analysis of transcriptional activity in the Arabidopsis genome.</title>
        <authorList>
            <person name="Yamada K."/>
            <person name="Lim J."/>
            <person name="Dale J.M."/>
            <person name="Chen H."/>
            <person name="Shinn P."/>
            <person name="Palm C.J."/>
            <person name="Southwick A.M."/>
            <person name="Wu H.C."/>
            <person name="Kim C.J."/>
            <person name="Nguyen M."/>
            <person name="Pham P.K."/>
            <person name="Cheuk R.F."/>
            <person name="Karlin-Newmann G."/>
            <person name="Liu S.X."/>
            <person name="Lam B."/>
            <person name="Sakano H."/>
            <person name="Wu T."/>
            <person name="Yu G."/>
            <person name="Miranda M."/>
            <person name="Quach H.L."/>
            <person name="Tripp M."/>
            <person name="Chang C.H."/>
            <person name="Lee J.M."/>
            <person name="Toriumi M.J."/>
            <person name="Chan M.M."/>
            <person name="Tang C.C."/>
            <person name="Onodera C.S."/>
            <person name="Deng J.M."/>
            <person name="Akiyama K."/>
            <person name="Ansari Y."/>
            <person name="Arakawa T."/>
            <person name="Banh J."/>
            <person name="Banno F."/>
            <person name="Bowser L."/>
            <person name="Brooks S.Y."/>
            <person name="Carninci P."/>
            <person name="Chao Q."/>
            <person name="Choy N."/>
            <person name="Enju A."/>
            <person name="Goldsmith A.D."/>
            <person name="Gurjal M."/>
            <person name="Hansen N.F."/>
            <person name="Hayashizaki Y."/>
            <person name="Johnson-Hopson C."/>
            <person name="Hsuan V.W."/>
            <person name="Iida K."/>
            <person name="Karnes M."/>
            <person name="Khan S."/>
            <person name="Koesema E."/>
            <person name="Ishida J."/>
            <person name="Jiang P.X."/>
            <person name="Jones T."/>
            <person name="Kawai J."/>
            <person name="Kamiya A."/>
            <person name="Meyers C."/>
            <person name="Nakajima M."/>
            <person name="Narusaka M."/>
            <person name="Seki M."/>
            <person name="Sakurai T."/>
            <person name="Satou M."/>
            <person name="Tamse R."/>
            <person name="Vaysberg M."/>
            <person name="Wallender E.K."/>
            <person name="Wong C."/>
            <person name="Yamamura Y."/>
            <person name="Yuan S."/>
            <person name="Shinozaki K."/>
            <person name="Davis R.W."/>
            <person name="Theologis A."/>
            <person name="Ecker J.R."/>
        </authorList>
    </citation>
    <scope>NUCLEOTIDE SEQUENCE [LARGE SCALE MRNA]</scope>
    <source>
        <strain>cv. Columbia</strain>
    </source>
</reference>
<reference key="5">
    <citation type="submission" date="2002-03" db="EMBL/GenBank/DDBJ databases">
        <title>Full-length cDNA from Arabidopsis thaliana.</title>
        <authorList>
            <person name="Brover V.V."/>
            <person name="Troukhan M.E."/>
            <person name="Alexandrov N.A."/>
            <person name="Lu Y.-P."/>
            <person name="Flavell R.B."/>
            <person name="Feldmann K.A."/>
        </authorList>
    </citation>
    <scope>NUCLEOTIDE SEQUENCE [LARGE SCALE MRNA]</scope>
</reference>
<reference key="6">
    <citation type="journal article" date="2009" name="Plant Mol. Biol.">
        <title>Stress induced and nuclear localized HIPP26 from Arabidopsis thaliana interacts via its heavy metal associated domain with the drought stress related zinc finger transcription factor ATHB29.</title>
        <authorList>
            <person name="Barth O."/>
            <person name="Vogt S."/>
            <person name="Uhlemann R."/>
            <person name="Zschiesche W."/>
            <person name="Humbeck K."/>
        </authorList>
    </citation>
    <scope>INTERACTION WITH ZHD11/HB29</scope>
    <source>
        <strain>cv. Columbia</strain>
    </source>
</reference>
<reference key="7">
    <citation type="journal article" date="2010" name="Metallomics">
        <title>Metallochaperone-like genes in Arabidopsis thaliana.</title>
        <authorList>
            <person name="Tehseen M."/>
            <person name="Cairns N."/>
            <person name="Sherson S."/>
            <person name="Cobbett C.S."/>
        </authorList>
    </citation>
    <scope>FUNCTION</scope>
    <scope>TISSUE SPECIFICITY</scope>
    <scope>NOMENCLATURE</scope>
    <scope>GENE FAMILY</scope>
    <scope>DISRUPTION PHENOTYPE</scope>
</reference>
<reference key="8">
    <citation type="journal article" date="2013" name="FEBS J.">
        <title>Heavy metal-associated isoprenylated plant protein (HIPP): characterization of a family of proteins exclusive to plants.</title>
        <authorList>
            <person name="de Abreu-Neto J.B."/>
            <person name="Turchetto-Zolet A.C."/>
            <person name="de Oliveira L.F."/>
            <person name="Zanettini M.H."/>
            <person name="Margis-Pinheiro M."/>
        </authorList>
    </citation>
    <scope>GENE FAMILY</scope>
    <scope>NOMENCLATURE</scope>
</reference>
<sequence>MGALDSLSEYISDYFRVTRKRRKRKVMQTVNIKVKMDCDGCERRVKNAVSSMKGVKSVEVNRKIHKVTVSGYVEPKKVLKRIERTGKKAEIWPYVPYNMVAYPYAVGTYDKKAPAGYVRKSEQSQLQLLPGAPENHYISLFSDENPNACTVM</sequence>
<feature type="chain" id="PRO_0000435855" description="Heavy metal-associated isoprenylated plant protein 20">
    <location>
        <begin position="1"/>
        <end position="149"/>
    </location>
</feature>
<feature type="propeptide" id="PRO_0000435856" description="Removed in mature form" evidence="7">
    <location>
        <begin position="150"/>
        <end position="152"/>
    </location>
</feature>
<feature type="domain" description="HMA" evidence="2">
    <location>
        <begin position="27"/>
        <end position="90"/>
    </location>
</feature>
<feature type="binding site" evidence="2 8">
    <location>
        <position position="38"/>
    </location>
    <ligand>
        <name>Cd(2+)</name>
        <dbReference type="ChEBI" id="CHEBI:48775"/>
    </ligand>
</feature>
<feature type="binding site" evidence="2 8">
    <location>
        <position position="41"/>
    </location>
    <ligand>
        <name>Cd(2+)</name>
        <dbReference type="ChEBI" id="CHEBI:48775"/>
    </ligand>
</feature>
<feature type="modified residue" description="Cysteine methyl ester" evidence="1">
    <location>
        <position position="149"/>
    </location>
</feature>
<feature type="lipid moiety-binding region" description="S-farnesyl cysteine" evidence="1">
    <location>
        <position position="149"/>
    </location>
</feature>
<keyword id="KW-0104">Cadmium</keyword>
<keyword id="KW-0449">Lipoprotein</keyword>
<keyword id="KW-0472">Membrane</keyword>
<keyword id="KW-0479">Metal-binding</keyword>
<keyword id="KW-0488">Methylation</keyword>
<keyword id="KW-0636">Prenylation</keyword>
<keyword id="KW-1185">Reference proteome</keyword>
<dbReference type="EMBL" id="AC016972">
    <property type="protein sequence ID" value="AAG51694.1"/>
    <property type="molecule type" value="Genomic_DNA"/>
</dbReference>
<dbReference type="EMBL" id="CP002684">
    <property type="protein sequence ID" value="AEE35156.1"/>
    <property type="molecule type" value="Genomic_DNA"/>
</dbReference>
<dbReference type="EMBL" id="AK117880">
    <property type="protein sequence ID" value="BAC42520.1"/>
    <property type="molecule type" value="mRNA"/>
</dbReference>
<dbReference type="EMBL" id="BT003666">
    <property type="protein sequence ID" value="AAO39894.1"/>
    <property type="molecule type" value="mRNA"/>
</dbReference>
<dbReference type="EMBL" id="AY087875">
    <property type="protein sequence ID" value="AAM65427.1"/>
    <property type="molecule type" value="mRNA"/>
</dbReference>
<dbReference type="PIR" id="H96734">
    <property type="entry name" value="H96734"/>
</dbReference>
<dbReference type="RefSeq" id="NP_177261.1">
    <property type="nucleotide sequence ID" value="NM_105774.4"/>
</dbReference>
<dbReference type="SMR" id="Q9C9A3"/>
<dbReference type="FunCoup" id="Q9C9A3">
    <property type="interactions" value="90"/>
</dbReference>
<dbReference type="IntAct" id="Q9C9A3">
    <property type="interactions" value="8"/>
</dbReference>
<dbReference type="STRING" id="3702.Q9C9A3"/>
<dbReference type="PaxDb" id="3702-AT1G71050.1"/>
<dbReference type="EnsemblPlants" id="AT1G71050.1">
    <property type="protein sequence ID" value="AT1G71050.1"/>
    <property type="gene ID" value="AT1G71050"/>
</dbReference>
<dbReference type="GeneID" id="843445"/>
<dbReference type="Gramene" id="AT1G71050.1">
    <property type="protein sequence ID" value="AT1G71050.1"/>
    <property type="gene ID" value="AT1G71050"/>
</dbReference>
<dbReference type="KEGG" id="ath:AT1G71050"/>
<dbReference type="Araport" id="AT1G71050"/>
<dbReference type="TAIR" id="AT1G71050">
    <property type="gene designation" value="HIPP20"/>
</dbReference>
<dbReference type="eggNOG" id="KOG1603">
    <property type="taxonomic scope" value="Eukaryota"/>
</dbReference>
<dbReference type="HOGENOM" id="CLU_100095_1_0_1"/>
<dbReference type="InParanoid" id="Q9C9A3"/>
<dbReference type="OMA" id="PENHYIS"/>
<dbReference type="PhylomeDB" id="Q9C9A3"/>
<dbReference type="PRO" id="PR:Q9C9A3"/>
<dbReference type="Proteomes" id="UP000006548">
    <property type="component" value="Chromosome 1"/>
</dbReference>
<dbReference type="ExpressionAtlas" id="Q9C9A3">
    <property type="expression patterns" value="baseline and differential"/>
</dbReference>
<dbReference type="GO" id="GO:0016020">
    <property type="term" value="C:membrane"/>
    <property type="evidence" value="ECO:0007669"/>
    <property type="project" value="UniProtKB-SubCell"/>
</dbReference>
<dbReference type="GO" id="GO:0046872">
    <property type="term" value="F:metal ion binding"/>
    <property type="evidence" value="ECO:0007669"/>
    <property type="project" value="UniProtKB-KW"/>
</dbReference>
<dbReference type="GO" id="GO:0071585">
    <property type="term" value="P:detoxification of cadmium ion"/>
    <property type="evidence" value="ECO:0000315"/>
    <property type="project" value="UniProtKB"/>
</dbReference>
<dbReference type="CDD" id="cd00371">
    <property type="entry name" value="HMA"/>
    <property type="match status" value="1"/>
</dbReference>
<dbReference type="FunFam" id="3.30.70.100:FF:000035">
    <property type="entry name" value="Heavy metal-associated isoprenylated plant protein 26"/>
    <property type="match status" value="1"/>
</dbReference>
<dbReference type="Gene3D" id="3.30.70.100">
    <property type="match status" value="1"/>
</dbReference>
<dbReference type="InterPro" id="IPR006121">
    <property type="entry name" value="HMA_dom"/>
</dbReference>
<dbReference type="InterPro" id="IPR036163">
    <property type="entry name" value="HMA_dom_sf"/>
</dbReference>
<dbReference type="PANTHER" id="PTHR22814">
    <property type="entry name" value="COPPER TRANSPORT PROTEIN ATOX1-RELATED"/>
    <property type="match status" value="1"/>
</dbReference>
<dbReference type="PANTHER" id="PTHR22814:SF356">
    <property type="entry name" value="HEAVY METAL-ASSOCIATED ISOPRENYLATED PLANT PROTEIN 20"/>
    <property type="match status" value="1"/>
</dbReference>
<dbReference type="Pfam" id="PF00403">
    <property type="entry name" value="HMA"/>
    <property type="match status" value="1"/>
</dbReference>
<dbReference type="SUPFAM" id="SSF55008">
    <property type="entry name" value="HMA, heavy metal-associated domain"/>
    <property type="match status" value="1"/>
</dbReference>
<dbReference type="PROSITE" id="PS50846">
    <property type="entry name" value="HMA_2"/>
    <property type="match status" value="1"/>
</dbReference>
<organism>
    <name type="scientific">Arabidopsis thaliana</name>
    <name type="common">Mouse-ear cress</name>
    <dbReference type="NCBI Taxonomy" id="3702"/>
    <lineage>
        <taxon>Eukaryota</taxon>
        <taxon>Viridiplantae</taxon>
        <taxon>Streptophyta</taxon>
        <taxon>Embryophyta</taxon>
        <taxon>Tracheophyta</taxon>
        <taxon>Spermatophyta</taxon>
        <taxon>Magnoliopsida</taxon>
        <taxon>eudicotyledons</taxon>
        <taxon>Gunneridae</taxon>
        <taxon>Pentapetalae</taxon>
        <taxon>rosids</taxon>
        <taxon>malvids</taxon>
        <taxon>Brassicales</taxon>
        <taxon>Brassicaceae</taxon>
        <taxon>Camelineae</taxon>
        <taxon>Arabidopsis</taxon>
    </lineage>
</organism>
<name>HIP20_ARATH</name>
<protein>
    <recommendedName>
        <fullName evidence="5 6">Heavy metal-associated isoprenylated plant protein 20</fullName>
        <shortName evidence="6">AtHIP20</shortName>
        <shortName evidence="5">AtHIPP20</shortName>
    </recommendedName>
</protein>
<accession>Q9C9A3</accession>
<proteinExistence type="evidence at protein level"/>
<gene>
    <name evidence="5 6" type="primary">HIPP20</name>
    <name evidence="9" type="ordered locus">At1g71050</name>
    <name evidence="10" type="ORF">F23N20.4</name>
</gene>
<evidence type="ECO:0000250" key="1">
    <source>
        <dbReference type="UniProtKB" id="Q9SZN7"/>
    </source>
</evidence>
<evidence type="ECO:0000255" key="2">
    <source>
        <dbReference type="PROSITE-ProRule" id="PRU00280"/>
    </source>
</evidence>
<evidence type="ECO:0000269" key="3">
    <source>
    </source>
</evidence>
<evidence type="ECO:0000269" key="4">
    <source>
    </source>
</evidence>
<evidence type="ECO:0000303" key="5">
    <source>
    </source>
</evidence>
<evidence type="ECO:0000303" key="6">
    <source>
    </source>
</evidence>
<evidence type="ECO:0000305" key="7"/>
<evidence type="ECO:0000305" key="8">
    <source>
    </source>
</evidence>
<evidence type="ECO:0000312" key="9">
    <source>
        <dbReference type="Araport" id="AT1G71050"/>
    </source>
</evidence>
<evidence type="ECO:0000312" key="10">
    <source>
        <dbReference type="EMBL" id="AAG51694.1"/>
    </source>
</evidence>